<organism>
    <name type="scientific">Eremothecium gossypii (strain ATCC 10895 / CBS 109.51 / FGSC 9923 / NRRL Y-1056)</name>
    <name type="common">Yeast</name>
    <name type="synonym">Ashbya gossypii</name>
    <dbReference type="NCBI Taxonomy" id="284811"/>
    <lineage>
        <taxon>Eukaryota</taxon>
        <taxon>Fungi</taxon>
        <taxon>Dikarya</taxon>
        <taxon>Ascomycota</taxon>
        <taxon>Saccharomycotina</taxon>
        <taxon>Saccharomycetes</taxon>
        <taxon>Saccharomycetales</taxon>
        <taxon>Saccharomycetaceae</taxon>
        <taxon>Eremothecium</taxon>
    </lineage>
</organism>
<keyword id="KW-0175">Coiled coil</keyword>
<keyword id="KW-0963">Cytoplasm</keyword>
<keyword id="KW-0539">Nucleus</keyword>
<keyword id="KW-1185">Reference proteome</keyword>
<keyword id="KW-0677">Repeat</keyword>
<keyword id="KW-0678">Repressor</keyword>
<keyword id="KW-0804">Transcription</keyword>
<keyword id="KW-0805">Transcription regulation</keyword>
<proteinExistence type="inferred from homology"/>
<dbReference type="EMBL" id="AE016818">
    <property type="protein sequence ID" value="AAS52932.1"/>
    <property type="molecule type" value="Genomic_DNA"/>
</dbReference>
<dbReference type="RefSeq" id="NP_985108.1">
    <property type="nucleotide sequence ID" value="NM_210462.1"/>
</dbReference>
<dbReference type="SMR" id="Q756K3"/>
<dbReference type="FunCoup" id="Q756K3">
    <property type="interactions" value="45"/>
</dbReference>
<dbReference type="EnsemblFungi" id="AAS52932">
    <property type="protein sequence ID" value="AAS52932"/>
    <property type="gene ID" value="AGOS_AER251W"/>
</dbReference>
<dbReference type="GeneID" id="4621318"/>
<dbReference type="KEGG" id="ago:AGOS_AER251W"/>
<dbReference type="eggNOG" id="ENOG502QS09">
    <property type="taxonomic scope" value="Eukaryota"/>
</dbReference>
<dbReference type="HOGENOM" id="CLU_048318_0_0_1"/>
<dbReference type="InParanoid" id="Q756K3"/>
<dbReference type="OMA" id="NFMTCNS"/>
<dbReference type="OrthoDB" id="3365399at2759"/>
<dbReference type="Proteomes" id="UP000000591">
    <property type="component" value="Chromosome V"/>
</dbReference>
<dbReference type="GO" id="GO:0005737">
    <property type="term" value="C:cytoplasm"/>
    <property type="evidence" value="ECO:0007669"/>
    <property type="project" value="UniProtKB-SubCell"/>
</dbReference>
<dbReference type="GO" id="GO:0005634">
    <property type="term" value="C:nucleus"/>
    <property type="evidence" value="ECO:0007669"/>
    <property type="project" value="UniProtKB-SubCell"/>
</dbReference>
<dbReference type="CDD" id="cd17080">
    <property type="entry name" value="Ubl_SLD2_Esc2_like"/>
    <property type="match status" value="1"/>
</dbReference>
<dbReference type="Gene3D" id="3.10.20.90">
    <property type="entry name" value="Phosphatidylinositol 3-kinase Catalytic Subunit, Chain A, domain 1"/>
    <property type="match status" value="1"/>
</dbReference>
<dbReference type="InterPro" id="IPR022617">
    <property type="entry name" value="Rad60/SUMO-like_dom"/>
</dbReference>
<dbReference type="InterPro" id="IPR000626">
    <property type="entry name" value="Ubiquitin-like_dom"/>
</dbReference>
<dbReference type="InterPro" id="IPR029071">
    <property type="entry name" value="Ubiquitin-like_domsf"/>
</dbReference>
<dbReference type="Pfam" id="PF11976">
    <property type="entry name" value="Rad60-SLD"/>
    <property type="match status" value="1"/>
</dbReference>
<dbReference type="SUPFAM" id="SSF54236">
    <property type="entry name" value="Ubiquitin-like"/>
    <property type="match status" value="1"/>
</dbReference>
<dbReference type="PROSITE" id="PS50053">
    <property type="entry name" value="UBIQUITIN_2"/>
    <property type="match status" value="1"/>
</dbReference>
<reference key="1">
    <citation type="journal article" date="2004" name="Science">
        <title>The Ashbya gossypii genome as a tool for mapping the ancient Saccharomyces cerevisiae genome.</title>
        <authorList>
            <person name="Dietrich F.S."/>
            <person name="Voegeli S."/>
            <person name="Brachat S."/>
            <person name="Lerch A."/>
            <person name="Gates K."/>
            <person name="Steiner S."/>
            <person name="Mohr C."/>
            <person name="Poehlmann R."/>
            <person name="Luedi P."/>
            <person name="Choi S."/>
            <person name="Wing R.A."/>
            <person name="Flavier A."/>
            <person name="Gaffney T.D."/>
            <person name="Philippsen P."/>
        </authorList>
    </citation>
    <scope>NUCLEOTIDE SEQUENCE [LARGE SCALE GENOMIC DNA]</scope>
    <source>
        <strain>ATCC 10895 / CBS 109.51 / FGSC 9923 / NRRL Y-1056</strain>
    </source>
</reference>
<reference key="2">
    <citation type="journal article" date="2013" name="G3 (Bethesda)">
        <title>Genomes of Ashbya fungi isolated from insects reveal four mating-type loci, numerous translocations, lack of transposons, and distinct gene duplications.</title>
        <authorList>
            <person name="Dietrich F.S."/>
            <person name="Voegeli S."/>
            <person name="Kuo S."/>
            <person name="Philippsen P."/>
        </authorList>
    </citation>
    <scope>GENOME REANNOTATION</scope>
    <source>
        <strain>ATCC 10895 / CBS 109.51 / FGSC 9923 / NRRL Y-1056</strain>
    </source>
</reference>
<accession>Q756K3</accession>
<evidence type="ECO:0000250" key="1"/>
<evidence type="ECO:0000256" key="2">
    <source>
        <dbReference type="SAM" id="MobiDB-lite"/>
    </source>
</evidence>
<name>ESC2_EREGS</name>
<protein>
    <recommendedName>
        <fullName>Protein ESC2</fullName>
    </recommendedName>
    <alternativeName>
        <fullName>Establishes silent chromatin protein 2</fullName>
    </alternativeName>
</protein>
<feature type="chain" id="PRO_0000227692" description="Protein ESC2">
    <location>
        <begin position="1"/>
        <end position="407"/>
    </location>
</feature>
<feature type="repeat" description="SUMO-like region 1">
    <location>
        <begin position="129"/>
        <end position="253"/>
    </location>
</feature>
<feature type="repeat" description="SUMO-like region 2">
    <location>
        <begin position="334"/>
        <end position="407"/>
    </location>
</feature>
<feature type="region of interest" description="Disordered" evidence="2">
    <location>
        <begin position="19"/>
        <end position="130"/>
    </location>
</feature>
<feature type="compositionally biased region" description="Basic and acidic residues" evidence="2">
    <location>
        <begin position="47"/>
        <end position="60"/>
    </location>
</feature>
<feature type="compositionally biased region" description="Low complexity" evidence="2">
    <location>
        <begin position="84"/>
        <end position="111"/>
    </location>
</feature>
<sequence>MGEFNEYDDIDDFFCNDISPLHDEADEFGSTDIALPSQLYGKGPKPRAGESKALRDRNKESGSGTESEAKGDTLATKRGRSSWRRGASESSRSSSLGSSSPSDSSSGRSLSPVRPAKRKRTDEQQPESEANRFLAEMERDIELSAGPGGGETATGKGGRDTDARVYNVGFISRIEGSRNRRVNVKVTGQKQFATFLAIALAAFSKQHNIRKSLKPKYQADQVKIYREGVEVFKFMTCDSFNIEEPYNASATDIEVYIVPVDEATAFEQEWKRKFEERVRMLSNSSFLEVMDDIEDDNDDFLVNEYEKALVNARSLNETELAVREGTPADESSQLLKIVLLGSDNKKVFIHVRPTTTLLKVAEHYRVAKELPPTVQLSLMFDHEEIDLDDTICNIDIEDGDIIEVVVK</sequence>
<comment type="function">
    <text evidence="1">May be a substrate targeting component of a cullin-RING-based E3 ubiquitin-protein ligase complex RTT101(MMS1-ESC2). Involved in HMR and telomere silencing via the recruitment or stabilizing of the SIR (silent information regulators) complex (By similarity).</text>
</comment>
<comment type="subunit">
    <text evidence="1">Component of a cullin-RING ligase (CRL)-like complex composed of at least the cullin RTT101, a linker protein MMS1, and the potential substrate receptor ESC2.</text>
</comment>
<comment type="subcellular location">
    <subcellularLocation>
        <location evidence="1">Cytoplasm</location>
    </subcellularLocation>
    <subcellularLocation>
        <location evidence="1">Nucleus</location>
    </subcellularLocation>
</comment>
<comment type="domain">
    <text>The 2 SUMO-like regions, although related to ubiquitin domains lack the conserved acceptor Gly residue in position 456.</text>
</comment>
<gene>
    <name type="primary">ESC2</name>
    <name type="ordered locus">AER251W</name>
</gene>